<dbReference type="EC" id="1.14.11.77" evidence="3 4"/>
<dbReference type="EMBL" id="AL123456">
    <property type="protein sequence ID" value="CCP46228.1"/>
    <property type="molecule type" value="Genomic_DNA"/>
</dbReference>
<dbReference type="PIR" id="C70736">
    <property type="entry name" value="C70736"/>
</dbReference>
<dbReference type="RefSeq" id="NP_217923.1">
    <property type="nucleotide sequence ID" value="NC_000962.3"/>
</dbReference>
<dbReference type="RefSeq" id="WP_003900050.1">
    <property type="nucleotide sequence ID" value="NZ_NVQJ01000027.1"/>
</dbReference>
<dbReference type="PDB" id="4CVY">
    <property type="method" value="X-ray"/>
    <property type="resolution" value="2.00 A"/>
    <property type="chains" value="A/B/C/D=1-295"/>
</dbReference>
<dbReference type="PDB" id="4FFA">
    <property type="method" value="X-ray"/>
    <property type="resolution" value="2.50 A"/>
    <property type="chains" value="A/B/C/D=1-295"/>
</dbReference>
<dbReference type="PDB" id="8EVN">
    <property type="method" value="X-ray"/>
    <property type="resolution" value="2.64 A"/>
    <property type="chains" value="A/B/C/D=1-295"/>
</dbReference>
<dbReference type="PDB" id="8EVO">
    <property type="method" value="X-ray"/>
    <property type="resolution" value="2.40 A"/>
    <property type="chains" value="A/B/C/D=1-295"/>
</dbReference>
<dbReference type="PDBsum" id="4CVY"/>
<dbReference type="PDBsum" id="4FFA"/>
<dbReference type="PDBsum" id="8EVN"/>
<dbReference type="PDBsum" id="8EVO"/>
<dbReference type="SMR" id="P9WKZ1"/>
<dbReference type="FunCoup" id="P9WKZ1">
    <property type="interactions" value="36"/>
</dbReference>
<dbReference type="STRING" id="83332.Rv3406"/>
<dbReference type="PaxDb" id="83332-Rv3406"/>
<dbReference type="DNASU" id="887955"/>
<dbReference type="GeneID" id="887955"/>
<dbReference type="KEGG" id="mtu:Rv3406"/>
<dbReference type="KEGG" id="mtv:RVBD_3406"/>
<dbReference type="TubercuList" id="Rv3406"/>
<dbReference type="eggNOG" id="COG2175">
    <property type="taxonomic scope" value="Bacteria"/>
</dbReference>
<dbReference type="InParanoid" id="P9WKZ1"/>
<dbReference type="OrthoDB" id="581608at2"/>
<dbReference type="PhylomeDB" id="P9WKZ1"/>
<dbReference type="BioCyc" id="MetaCyc:G185E-7683-MONOMER"/>
<dbReference type="BRENDA" id="1.14.11.77">
    <property type="organism ID" value="3445"/>
</dbReference>
<dbReference type="EvolutionaryTrace" id="P9WKZ1"/>
<dbReference type="Proteomes" id="UP000001584">
    <property type="component" value="Chromosome"/>
</dbReference>
<dbReference type="GO" id="GO:0005737">
    <property type="term" value="C:cytoplasm"/>
    <property type="evidence" value="ECO:0000318"/>
    <property type="project" value="GO_Central"/>
</dbReference>
<dbReference type="GO" id="GO:0005886">
    <property type="term" value="C:plasma membrane"/>
    <property type="evidence" value="ECO:0007005"/>
    <property type="project" value="MTBBASE"/>
</dbReference>
<dbReference type="GO" id="GO:0016706">
    <property type="term" value="F:2-oxoglutarate-dependent dioxygenase activity"/>
    <property type="evidence" value="ECO:0000318"/>
    <property type="project" value="GO_Central"/>
</dbReference>
<dbReference type="GO" id="GO:0046872">
    <property type="term" value="F:metal ion binding"/>
    <property type="evidence" value="ECO:0007669"/>
    <property type="project" value="UniProtKB-KW"/>
</dbReference>
<dbReference type="GO" id="GO:0046677">
    <property type="term" value="P:response to antibiotic"/>
    <property type="evidence" value="ECO:0007669"/>
    <property type="project" value="UniProtKB-KW"/>
</dbReference>
<dbReference type="FunFam" id="3.60.130.10:FF:000002">
    <property type="entry name" value="Alpha-ketoglutarate-dependent taurine dioxygenase"/>
    <property type="match status" value="1"/>
</dbReference>
<dbReference type="Gene3D" id="3.60.130.10">
    <property type="entry name" value="Clavaminate synthase-like"/>
    <property type="match status" value="1"/>
</dbReference>
<dbReference type="InterPro" id="IPR051323">
    <property type="entry name" value="AtsK-like"/>
</dbReference>
<dbReference type="InterPro" id="IPR042098">
    <property type="entry name" value="TauD-like_sf"/>
</dbReference>
<dbReference type="InterPro" id="IPR003819">
    <property type="entry name" value="TauD/TfdA-like"/>
</dbReference>
<dbReference type="PANTHER" id="PTHR30468:SF5">
    <property type="entry name" value="ALPHA-KETOGLUTARATE-DEPENDENT SULFATE ESTER DIOXYGENASE"/>
    <property type="match status" value="1"/>
</dbReference>
<dbReference type="PANTHER" id="PTHR30468">
    <property type="entry name" value="ALPHA-KETOGLUTARATE-DEPENDENT SULFONATE DIOXYGENASE"/>
    <property type="match status" value="1"/>
</dbReference>
<dbReference type="Pfam" id="PF02668">
    <property type="entry name" value="TauD"/>
    <property type="match status" value="1"/>
</dbReference>
<dbReference type="SUPFAM" id="SSF51197">
    <property type="entry name" value="Clavaminate synthase-like"/>
    <property type="match status" value="1"/>
</dbReference>
<evidence type="ECO:0000250" key="1">
    <source>
        <dbReference type="UniProtKB" id="Q9WWU5"/>
    </source>
</evidence>
<evidence type="ECO:0000269" key="2">
    <source>
    </source>
</evidence>
<evidence type="ECO:0000269" key="3">
    <source>
    </source>
</evidence>
<evidence type="ECO:0000269" key="4">
    <source>
    </source>
</evidence>
<evidence type="ECO:0000269" key="5">
    <source>
    </source>
</evidence>
<evidence type="ECO:0000303" key="6">
    <source>
    </source>
</evidence>
<evidence type="ECO:0000305" key="7"/>
<evidence type="ECO:0007829" key="8">
    <source>
        <dbReference type="PDB" id="4CVY"/>
    </source>
</evidence>
<keyword id="KW-0002">3D-structure</keyword>
<keyword id="KW-0046">Antibiotic resistance</keyword>
<keyword id="KW-0223">Dioxygenase</keyword>
<keyword id="KW-0408">Iron</keyword>
<keyword id="KW-0479">Metal-binding</keyword>
<keyword id="KW-0560">Oxidoreductase</keyword>
<keyword id="KW-1185">Reference proteome</keyword>
<accession>P9WKZ1</accession>
<accession>L0TCF8</accession>
<accession>P65075</accession>
<accession>Q50719</accession>
<reference key="1">
    <citation type="journal article" date="1998" name="Nature">
        <title>Deciphering the biology of Mycobacterium tuberculosis from the complete genome sequence.</title>
        <authorList>
            <person name="Cole S.T."/>
            <person name="Brosch R."/>
            <person name="Parkhill J."/>
            <person name="Garnier T."/>
            <person name="Churcher C.M."/>
            <person name="Harris D.E."/>
            <person name="Gordon S.V."/>
            <person name="Eiglmeier K."/>
            <person name="Gas S."/>
            <person name="Barry C.E. III"/>
            <person name="Tekaia F."/>
            <person name="Badcock K."/>
            <person name="Basham D."/>
            <person name="Brown D."/>
            <person name="Chillingworth T."/>
            <person name="Connor R."/>
            <person name="Davies R.M."/>
            <person name="Devlin K."/>
            <person name="Feltwell T."/>
            <person name="Gentles S."/>
            <person name="Hamlin N."/>
            <person name="Holroyd S."/>
            <person name="Hornsby T."/>
            <person name="Jagels K."/>
            <person name="Krogh A."/>
            <person name="McLean J."/>
            <person name="Moule S."/>
            <person name="Murphy L.D."/>
            <person name="Oliver S."/>
            <person name="Osborne J."/>
            <person name="Quail M.A."/>
            <person name="Rajandream M.A."/>
            <person name="Rogers J."/>
            <person name="Rutter S."/>
            <person name="Seeger K."/>
            <person name="Skelton S."/>
            <person name="Squares S."/>
            <person name="Squares R."/>
            <person name="Sulston J.E."/>
            <person name="Taylor K."/>
            <person name="Whitehead S."/>
            <person name="Barrell B.G."/>
        </authorList>
    </citation>
    <scope>NUCLEOTIDE SEQUENCE [LARGE SCALE GENOMIC DNA]</scope>
    <source>
        <strain>ATCC 25618 / H37Rv</strain>
    </source>
</reference>
<reference key="2">
    <citation type="journal article" date="2008" name="BMC Syst. Biol.">
        <title>targetTB: a target identification pipeline for Mycobacterium tuberculosis through an interactome, reactome and genome-scale structural analysis.</title>
        <authorList>
            <person name="Raman K."/>
            <person name="Yeturu K."/>
            <person name="Chandra N."/>
        </authorList>
    </citation>
    <scope>IDENTIFICATION AS A DRUG TARGET [LARGE SCALE ANALYSIS]</scope>
</reference>
<reference key="3">
    <citation type="journal article" date="2011" name="Mol. Cell. Proteomics">
        <title>Proteogenomic analysis of Mycobacterium tuberculosis by high resolution mass spectrometry.</title>
        <authorList>
            <person name="Kelkar D.S."/>
            <person name="Kumar D."/>
            <person name="Kumar P."/>
            <person name="Balakrishnan L."/>
            <person name="Muthusamy B."/>
            <person name="Yadav A.K."/>
            <person name="Shrivastava P."/>
            <person name="Marimuthu A."/>
            <person name="Anand S."/>
            <person name="Sundaram H."/>
            <person name="Kingsbury R."/>
            <person name="Harsha H.C."/>
            <person name="Nair B."/>
            <person name="Prasad T.S."/>
            <person name="Chauhan D.S."/>
            <person name="Katoch K."/>
            <person name="Katoch V.M."/>
            <person name="Kumar P."/>
            <person name="Chaerkady R."/>
            <person name="Ramachandran S."/>
            <person name="Dash D."/>
            <person name="Pandey A."/>
        </authorList>
    </citation>
    <scope>IDENTIFICATION BY MASS SPECTROMETRY [LARGE SCALE ANALYSIS]</scope>
    <source>
        <strain>ATCC 25618 / H37Rv</strain>
    </source>
</reference>
<reference key="4">
    <citation type="journal article" date="2018" name="Biochem. Biophys. Res. Commun.">
        <title>Biophysical and biochemical characterization of Rv3405c, a tetracycline repressor protein from Mycobacterium tuberculosis.</title>
        <authorList>
            <person name="Gopalan A."/>
            <person name="Bhagavat R."/>
            <person name="Chandra N."/>
            <person name="Subbarao S.H."/>
            <person name="Raja A."/>
            <person name="Bethunaickan R."/>
        </authorList>
    </citation>
    <scope>INDUCTION</scope>
    <source>
        <strain>H37Rv</strain>
    </source>
</reference>
<reference key="5">
    <citation type="journal article" date="2013" name="PLoS ONE">
        <title>Mycobacterium tuberculosis Rv3406 is a type II alkyl sulfatase capable of sulfate scavenging.</title>
        <authorList>
            <person name="Sogi K.M."/>
            <person name="Gartner Z.J."/>
            <person name="Breidenbach M.A."/>
            <person name="Appel M.J."/>
            <person name="Schelle M.W."/>
            <person name="Bertozzi C.R."/>
        </authorList>
    </citation>
    <scope>X-RAY CRYSTALLOGRAPHY (2.50 ANGSTROMS)</scope>
    <scope>FUNCTION</scope>
    <scope>CATALYTIC ACTIVITY</scope>
    <scope>DISRUPTION PHENOTYPE</scope>
    <scope>COFACTOR</scope>
    <scope>SUBSTRATE SPECIFICITY</scope>
    <source>
        <strain>ATCC 35801 / TMC 107 / Erdman</strain>
        <strain>H37Rv</strain>
    </source>
</reference>
<reference key="6">
    <citation type="journal article" date="2015" name="ACS Chem. Biol.">
        <title>2-Carboxyquinoxalines kill Mycobacterium tuberculosis through noncovalent inhibition of DprE1.</title>
        <authorList>
            <person name="Neres J."/>
            <person name="Hartkoorn R.C."/>
            <person name="Chiarelli L.R."/>
            <person name="Gadupudi R."/>
            <person name="Pasca M.R."/>
            <person name="Mori G."/>
            <person name="Venturelli A."/>
            <person name="Savina S."/>
            <person name="Makarov V."/>
            <person name="Kolly G.S."/>
            <person name="Molteni E."/>
            <person name="Binda C."/>
            <person name="Dhar N."/>
            <person name="Ferrari S."/>
            <person name="Brodin P."/>
            <person name="Delorme V."/>
            <person name="Landry V."/>
            <person name="de Jesus Lopes Ribeiro A.L."/>
            <person name="Farina D."/>
            <person name="Saxena P."/>
            <person name="Pojer F."/>
            <person name="Carta A."/>
            <person name="Luciani R."/>
            <person name="Porta A."/>
            <person name="Zanoni G."/>
            <person name="De Rossi E."/>
            <person name="Costi M.P."/>
            <person name="Riccardi G."/>
            <person name="Cole S.T."/>
        </authorList>
    </citation>
    <scope>X-RAY CRYSTALLOGRAPHY (2.0 ANGSTROMS) IN COMPLEX WITH IRON ION</scope>
    <scope>FUNCTION</scope>
    <scope>CATALYTIC ACTIVITY</scope>
    <scope>BIOPHYSICOCHEMICAL PROPERTIES</scope>
    <scope>COFACTOR</scope>
    <scope>INDUCTION</scope>
</reference>
<feature type="chain" id="PRO_0000104125" description="Alpha-ketoglutarate-dependent sulfate ester dioxygenase">
    <location>
        <begin position="1"/>
        <end position="295"/>
    </location>
</feature>
<feature type="binding site" evidence="1">
    <location>
        <position position="71"/>
    </location>
    <ligand>
        <name>substrate</name>
    </ligand>
</feature>
<feature type="binding site" evidence="4">
    <location>
        <position position="98"/>
    </location>
    <ligand>
        <name>Fe cation</name>
        <dbReference type="ChEBI" id="CHEBI:24875"/>
    </ligand>
</feature>
<feature type="binding site" evidence="4">
    <location>
        <position position="100"/>
    </location>
    <ligand>
        <name>Fe cation</name>
        <dbReference type="ChEBI" id="CHEBI:24875"/>
    </ligand>
</feature>
<feature type="binding site" evidence="1">
    <location>
        <position position="101"/>
    </location>
    <ligand>
        <name>substrate</name>
    </ligand>
</feature>
<feature type="binding site" evidence="1">
    <location>
        <position position="125"/>
    </location>
    <ligand>
        <name>2-oxoglutarate</name>
        <dbReference type="ChEBI" id="CHEBI:16810"/>
    </ligand>
</feature>
<feature type="binding site" evidence="4">
    <location>
        <position position="252"/>
    </location>
    <ligand>
        <name>Fe cation</name>
        <dbReference type="ChEBI" id="CHEBI:24875"/>
    </ligand>
</feature>
<feature type="binding site" evidence="1">
    <location>
        <position position="263"/>
    </location>
    <ligand>
        <name>2-oxoglutarate</name>
        <dbReference type="ChEBI" id="CHEBI:16810"/>
    </ligand>
</feature>
<feature type="binding site" evidence="1">
    <location>
        <position position="267"/>
    </location>
    <ligand>
        <name>2-oxoglutarate</name>
        <dbReference type="ChEBI" id="CHEBI:16810"/>
    </ligand>
</feature>
<feature type="strand" evidence="8">
    <location>
        <begin position="6"/>
        <end position="9"/>
    </location>
</feature>
<feature type="strand" evidence="8">
    <location>
        <begin position="11"/>
        <end position="14"/>
    </location>
</feature>
<feature type="strand" evidence="8">
    <location>
        <begin position="16"/>
        <end position="20"/>
    </location>
</feature>
<feature type="helix" evidence="8">
    <location>
        <begin position="29"/>
        <end position="42"/>
    </location>
</feature>
<feature type="strand" evidence="8">
    <location>
        <begin position="43"/>
        <end position="47"/>
    </location>
</feature>
<feature type="helix" evidence="8">
    <location>
        <begin position="55"/>
        <end position="63"/>
    </location>
</feature>
<feature type="turn" evidence="8">
    <location>
        <begin position="100"/>
        <end position="103"/>
    </location>
</feature>
<feature type="strand" evidence="8">
    <location>
        <begin position="104"/>
        <end position="106"/>
    </location>
</feature>
<feature type="strand" evidence="8">
    <location>
        <begin position="109"/>
        <end position="117"/>
    </location>
</feature>
<feature type="strand" evidence="8">
    <location>
        <begin position="125"/>
        <end position="129"/>
    </location>
</feature>
<feature type="helix" evidence="8">
    <location>
        <begin position="130"/>
        <end position="135"/>
    </location>
</feature>
<feature type="helix" evidence="8">
    <location>
        <begin position="139"/>
        <end position="146"/>
    </location>
</feature>
<feature type="strand" evidence="8">
    <location>
        <begin position="149"/>
        <end position="153"/>
    </location>
</feature>
<feature type="strand" evidence="8">
    <location>
        <begin position="181"/>
        <end position="189"/>
    </location>
</feature>
<feature type="turn" evidence="8">
    <location>
        <begin position="191"/>
        <end position="193"/>
    </location>
</feature>
<feature type="strand" evidence="8">
    <location>
        <begin position="196"/>
        <end position="198"/>
    </location>
</feature>
<feature type="strand" evidence="8">
    <location>
        <begin position="204"/>
        <end position="207"/>
    </location>
</feature>
<feature type="helix" evidence="8">
    <location>
        <begin position="212"/>
        <end position="227"/>
    </location>
</feature>
<feature type="helix" evidence="8">
    <location>
        <begin position="229"/>
        <end position="231"/>
    </location>
</feature>
<feature type="strand" evidence="8">
    <location>
        <begin position="232"/>
        <end position="235"/>
    </location>
</feature>
<feature type="strand" evidence="8">
    <location>
        <begin position="242"/>
        <end position="246"/>
    </location>
</feature>
<feature type="strand" evidence="8">
    <location>
        <begin position="249"/>
        <end position="254"/>
    </location>
</feature>
<feature type="strand" evidence="8">
    <location>
        <begin position="264"/>
        <end position="270"/>
    </location>
</feature>
<feature type="strand" evidence="8">
    <location>
        <begin position="284"/>
        <end position="288"/>
    </location>
</feature>
<gene>
    <name type="ordered locus">Rv3406</name>
    <name type="ORF">MTCY78.22c</name>
</gene>
<proteinExistence type="evidence at protein level"/>
<comment type="function">
    <text evidence="3 4">Alpha-ketoglutarate-dependent sulfate ester dioxygenase, which oxidizes medium-chain alkyl-sulfate esters (PubMed:23762287). Shows preference for 2-ethylhexyl sulfate (2-EHS) in vitro, leading to the formation of succinate and 2-ethylhexanal (PubMed:23762287, PubMed:25427196). Has likely a role in sulfate scavenging in vivo (PubMed:23762287).</text>
</comment>
<comment type="function">
    <text evidence="4">Also causes the inactivation of the 2-carboxyquinoxaline Ty38c (an antitubercular compound that inhibits DprE1) via oxidative decarboxylation, using Ty38c instead of alpha-ketoglutarate as a substrate. Is thus responsible for primary resistance of M.tuberculosis to Ty38c in vitro. Overexpression of Rv3406 causes resistance to Ty38c.</text>
</comment>
<comment type="catalytic activity">
    <reaction evidence="3 4">
        <text>a primary linear alkyl sulfate ester + 2-oxoglutarate + O2 = an aldehyde + sulfate + succinate + CO2 + H(+)</text>
        <dbReference type="Rhea" id="RHEA:65716"/>
        <dbReference type="ChEBI" id="CHEBI:15378"/>
        <dbReference type="ChEBI" id="CHEBI:15379"/>
        <dbReference type="ChEBI" id="CHEBI:16189"/>
        <dbReference type="ChEBI" id="CHEBI:16526"/>
        <dbReference type="ChEBI" id="CHEBI:16810"/>
        <dbReference type="ChEBI" id="CHEBI:17478"/>
        <dbReference type="ChEBI" id="CHEBI:30031"/>
        <dbReference type="ChEBI" id="CHEBI:157685"/>
        <dbReference type="EC" id="1.14.11.77"/>
    </reaction>
</comment>
<comment type="catalytic activity">
    <reaction evidence="3 4">
        <text>2-ethylhexyl sulfate + 2-oxoglutarate + O2 = 2-ethylhexanal + sulfate + succinate + CO2 + H(+)</text>
        <dbReference type="Rhea" id="RHEA:47620"/>
        <dbReference type="ChEBI" id="CHEBI:15378"/>
        <dbReference type="ChEBI" id="CHEBI:15379"/>
        <dbReference type="ChEBI" id="CHEBI:16189"/>
        <dbReference type="ChEBI" id="CHEBI:16526"/>
        <dbReference type="ChEBI" id="CHEBI:16810"/>
        <dbReference type="ChEBI" id="CHEBI:30031"/>
        <dbReference type="ChEBI" id="CHEBI:87808"/>
        <dbReference type="ChEBI" id="CHEBI:87809"/>
        <dbReference type="EC" id="1.14.11.77"/>
    </reaction>
</comment>
<comment type="catalytic activity">
    <reaction evidence="3">
        <text>hexyl sulfate + 2-oxoglutarate + O2 = hexanal + sulfate + succinate + CO2 + H(+)</text>
        <dbReference type="Rhea" id="RHEA:65728"/>
        <dbReference type="ChEBI" id="CHEBI:15378"/>
        <dbReference type="ChEBI" id="CHEBI:15379"/>
        <dbReference type="ChEBI" id="CHEBI:16189"/>
        <dbReference type="ChEBI" id="CHEBI:16526"/>
        <dbReference type="ChEBI" id="CHEBI:16810"/>
        <dbReference type="ChEBI" id="CHEBI:30031"/>
        <dbReference type="ChEBI" id="CHEBI:88528"/>
        <dbReference type="ChEBI" id="CHEBI:157688"/>
        <dbReference type="EC" id="1.14.11.77"/>
    </reaction>
</comment>
<comment type="catalytic activity">
    <reaction evidence="3">
        <text>pentyl sulfate + 2-oxoglutarate + O2 = pentanal + sulfate + succinate + CO2 + H(+)</text>
        <dbReference type="Rhea" id="RHEA:65724"/>
        <dbReference type="ChEBI" id="CHEBI:15378"/>
        <dbReference type="ChEBI" id="CHEBI:15379"/>
        <dbReference type="ChEBI" id="CHEBI:16189"/>
        <dbReference type="ChEBI" id="CHEBI:16526"/>
        <dbReference type="ChEBI" id="CHEBI:16810"/>
        <dbReference type="ChEBI" id="CHEBI:30031"/>
        <dbReference type="ChEBI" id="CHEBI:84069"/>
        <dbReference type="ChEBI" id="CHEBI:157687"/>
        <dbReference type="EC" id="1.14.11.77"/>
    </reaction>
</comment>
<comment type="catalytic activity">
    <reaction evidence="3">
        <text>heptyl sulfate + 2-oxoglutarate + O2 = heptanal + sulfate + succinate + CO2 + H(+)</text>
        <dbReference type="Rhea" id="RHEA:65732"/>
        <dbReference type="ChEBI" id="CHEBI:15378"/>
        <dbReference type="ChEBI" id="CHEBI:15379"/>
        <dbReference type="ChEBI" id="CHEBI:16189"/>
        <dbReference type="ChEBI" id="CHEBI:16526"/>
        <dbReference type="ChEBI" id="CHEBI:16810"/>
        <dbReference type="ChEBI" id="CHEBI:30031"/>
        <dbReference type="ChEBI" id="CHEBI:34787"/>
        <dbReference type="ChEBI" id="CHEBI:157689"/>
        <dbReference type="EC" id="1.14.11.77"/>
    </reaction>
</comment>
<comment type="cofactor">
    <cofactor evidence="3 4">
        <name>Fe(2+)</name>
        <dbReference type="ChEBI" id="CHEBI:29033"/>
    </cofactor>
</comment>
<comment type="biophysicochemical properties">
    <kinetics>
        <KM evidence="4">8.8 uM for 2-EHS (at pH 7 and 25 degrees Celsius)</KM>
        <KM evidence="4">9.4 uM for alpha-ketoglutarate (at pH 7 and 25 degrees Celsius)</KM>
        <KM evidence="4">160 uM for Ty38c (at pH 7 and 25 degrees Celsius)</KM>
        <text evidence="4">kcat is 21.8 min(-1) with alpha-ketoglutarate and 2-EHS as substrates (at pH 7 and 25 degrees Celsius). kcat is 1.54 min(-1) for the oxidative decarboxylation of Ty38c (at pH 7 and 25 degrees Celsius).</text>
    </kinetics>
</comment>
<comment type="induction">
    <text evidence="4 5">Repressed by the transcriptional repressor Rv3405c.</text>
</comment>
<comment type="disruption phenotype">
    <text evidence="3">Cells lacking this gene do not replicate in minimal media with 2-ethyl hexyl sulfate as the sole sulfur source, in contrast to wild-type.</text>
</comment>
<comment type="miscellaneous">
    <text evidence="2">Was identified as a high-confidence drug target.</text>
</comment>
<comment type="similarity">
    <text evidence="7">Belongs to the TfdA dioxygenase family.</text>
</comment>
<organism>
    <name type="scientific">Mycobacterium tuberculosis (strain ATCC 25618 / H37Rv)</name>
    <dbReference type="NCBI Taxonomy" id="83332"/>
    <lineage>
        <taxon>Bacteria</taxon>
        <taxon>Bacillati</taxon>
        <taxon>Actinomycetota</taxon>
        <taxon>Actinomycetes</taxon>
        <taxon>Mycobacteriales</taxon>
        <taxon>Mycobacteriaceae</taxon>
        <taxon>Mycobacterium</taxon>
        <taxon>Mycobacterium tuberculosis complex</taxon>
    </lineage>
</organism>
<name>ATSK_MYCTU</name>
<sequence>MTDLITVKKLGSRIGAQIDGVRLGGDLDPAAVNEIRAALLAHKVVFFRGQHQLDDAEQLAFAGLLGTPIGHPAAIALADDAPIITPINSEFGKANRWHTDVTFAANYPAASVLRAVSLPSYGGSTLWANTAAAYAELPEPLKCLTENLWALHTNRYDYVTTKPLTAAQRAFRQVFEKPDFRTEHPVVRVHPETGERTLLAGDFVRSFVGLDSHESRVLFEVLQRRITMPENTIRWNWAPGDVAIWDNRATQHRAIDDYDDQHRLMHRVTLMGDVPVDVYGQASRVISGAPMEIAG</sequence>
<protein>
    <recommendedName>
        <fullName evidence="6">Alpha-ketoglutarate-dependent sulfate ester dioxygenase</fullName>
        <ecNumber evidence="3 4">1.14.11.77</ecNumber>
    </recommendedName>
    <alternativeName>
        <fullName evidence="6">Type II alkyl sulfatase</fullName>
    </alternativeName>
</protein>